<comment type="similarity">
    <text evidence="3">To R.meliloti RA0936 and y4aO.</text>
</comment>
<keyword id="KW-0614">Plasmid</keyword>
<keyword id="KW-1185">Reference proteome</keyword>
<keyword id="KW-0732">Signal</keyword>
<geneLocation type="plasmid">
    <name>sym pNGR234a</name>
</geneLocation>
<sequence length="230" mass="25361">MARYDARLRGIGKAHACSAFAGHDFEGRNIMKTPWKFLAQLASRRRSASVQENFIAPDTDPEVIESETENKSPLPFDKPTQASGTPDHDSAVDRGSMLSDQLESDPNPLQEMNLTADIQEPGTPARSETKQSDAAGKRLGPQSQTSANSQKKPEIRCRERSKNARAEGVAQSAVATNEAETVQTSSSGDPFFNEVAILDEEIKELRRLLAQKLYLQNAQLKKMLERFDAS</sequence>
<feature type="signal peptide" evidence="1">
    <location>
        <begin position="1"/>
        <end position="21"/>
    </location>
</feature>
<feature type="chain" id="PRO_0000014170" description="Uncharacterized protein y4nF">
    <location>
        <begin position="22"/>
        <end position="230"/>
    </location>
</feature>
<feature type="region of interest" description="Disordered" evidence="2">
    <location>
        <begin position="47"/>
        <end position="190"/>
    </location>
</feature>
<feature type="compositionally biased region" description="Polar residues" evidence="2">
    <location>
        <begin position="141"/>
        <end position="150"/>
    </location>
</feature>
<feature type="compositionally biased region" description="Basic and acidic residues" evidence="2">
    <location>
        <begin position="151"/>
        <end position="165"/>
    </location>
</feature>
<feature type="compositionally biased region" description="Polar residues" evidence="2">
    <location>
        <begin position="173"/>
        <end position="188"/>
    </location>
</feature>
<evidence type="ECO:0000255" key="1"/>
<evidence type="ECO:0000256" key="2">
    <source>
        <dbReference type="SAM" id="MobiDB-lite"/>
    </source>
</evidence>
<evidence type="ECO:0000305" key="3"/>
<protein>
    <recommendedName>
        <fullName>Uncharacterized protein y4nF</fullName>
    </recommendedName>
</protein>
<proteinExistence type="inferred from homology"/>
<accession>P55578</accession>
<dbReference type="EMBL" id="U00090">
    <property type="protein sequence ID" value="AAB91793.1"/>
    <property type="molecule type" value="Genomic_DNA"/>
</dbReference>
<dbReference type="RefSeq" id="NP_443989.1">
    <property type="nucleotide sequence ID" value="NC_000914.2"/>
</dbReference>
<dbReference type="RefSeq" id="WP_010875263.1">
    <property type="nucleotide sequence ID" value="NC_000914.2"/>
</dbReference>
<dbReference type="SMR" id="P55578"/>
<dbReference type="KEGG" id="rhi:NGR_a02360"/>
<dbReference type="eggNOG" id="ENOG50319QJ">
    <property type="taxonomic scope" value="Bacteria"/>
</dbReference>
<dbReference type="HOGENOM" id="CLU_095693_0_0_5"/>
<dbReference type="OrthoDB" id="8277693at2"/>
<dbReference type="Proteomes" id="UP000001054">
    <property type="component" value="Plasmid pNGR234a"/>
</dbReference>
<gene>
    <name type="ordered locus">NGR_a02360</name>
    <name type="ORF">y4nF</name>
</gene>
<name>Y4NF_SINFN</name>
<organism>
    <name type="scientific">Sinorhizobium fredii (strain NBRC 101917 / NGR234)</name>
    <dbReference type="NCBI Taxonomy" id="394"/>
    <lineage>
        <taxon>Bacteria</taxon>
        <taxon>Pseudomonadati</taxon>
        <taxon>Pseudomonadota</taxon>
        <taxon>Alphaproteobacteria</taxon>
        <taxon>Hyphomicrobiales</taxon>
        <taxon>Rhizobiaceae</taxon>
        <taxon>Sinorhizobium/Ensifer group</taxon>
        <taxon>Sinorhizobium</taxon>
    </lineage>
</organism>
<reference key="1">
    <citation type="journal article" date="1997" name="Nature">
        <title>Molecular basis of symbiosis between Rhizobium and legumes.</title>
        <authorList>
            <person name="Freiberg C.A."/>
            <person name="Fellay R."/>
            <person name="Bairoch A."/>
            <person name="Broughton W.J."/>
            <person name="Rosenthal A."/>
            <person name="Perret X."/>
        </authorList>
    </citation>
    <scope>NUCLEOTIDE SEQUENCE [LARGE SCALE GENOMIC DNA]</scope>
    <source>
        <strain>NBRC 101917 / NGR234</strain>
    </source>
</reference>
<reference key="2">
    <citation type="journal article" date="2009" name="Appl. Environ. Microbiol.">
        <title>Rhizobium sp. strain NGR234 possesses a remarkable number of secretion systems.</title>
        <authorList>
            <person name="Schmeisser C."/>
            <person name="Liesegang H."/>
            <person name="Krysciak D."/>
            <person name="Bakkou N."/>
            <person name="Le Quere A."/>
            <person name="Wollherr A."/>
            <person name="Heinemeyer I."/>
            <person name="Morgenstern B."/>
            <person name="Pommerening-Roeser A."/>
            <person name="Flores M."/>
            <person name="Palacios R."/>
            <person name="Brenner S."/>
            <person name="Gottschalk G."/>
            <person name="Schmitz R.A."/>
            <person name="Broughton W.J."/>
            <person name="Perret X."/>
            <person name="Strittmatter A.W."/>
            <person name="Streit W.R."/>
        </authorList>
    </citation>
    <scope>NUCLEOTIDE SEQUENCE [LARGE SCALE GENOMIC DNA]</scope>
    <source>
        <strain>NBRC 101917 / NGR234</strain>
    </source>
</reference>